<gene>
    <name evidence="1" type="primary">rplS</name>
    <name type="ordered locus">Haur_0226</name>
</gene>
<name>RL19_HERA2</name>
<evidence type="ECO:0000255" key="1">
    <source>
        <dbReference type="HAMAP-Rule" id="MF_00402"/>
    </source>
</evidence>
<evidence type="ECO:0000305" key="2"/>
<feature type="chain" id="PRO_1000193851" description="Large ribosomal subunit protein bL19">
    <location>
        <begin position="1"/>
        <end position="118"/>
    </location>
</feature>
<organism>
    <name type="scientific">Herpetosiphon aurantiacus (strain ATCC 23779 / DSM 785 / 114-95)</name>
    <dbReference type="NCBI Taxonomy" id="316274"/>
    <lineage>
        <taxon>Bacteria</taxon>
        <taxon>Bacillati</taxon>
        <taxon>Chloroflexota</taxon>
        <taxon>Chloroflexia</taxon>
        <taxon>Herpetosiphonales</taxon>
        <taxon>Herpetosiphonaceae</taxon>
        <taxon>Herpetosiphon</taxon>
    </lineage>
</organism>
<dbReference type="EMBL" id="CP000875">
    <property type="protein sequence ID" value="ABX02878.1"/>
    <property type="molecule type" value="Genomic_DNA"/>
</dbReference>
<dbReference type="SMR" id="A9B6H5"/>
<dbReference type="FunCoup" id="A9B6H5">
    <property type="interactions" value="439"/>
</dbReference>
<dbReference type="STRING" id="316274.Haur_0226"/>
<dbReference type="KEGG" id="hau:Haur_0226"/>
<dbReference type="eggNOG" id="COG0335">
    <property type="taxonomic scope" value="Bacteria"/>
</dbReference>
<dbReference type="HOGENOM" id="CLU_103507_2_2_0"/>
<dbReference type="InParanoid" id="A9B6H5"/>
<dbReference type="Proteomes" id="UP000000787">
    <property type="component" value="Chromosome"/>
</dbReference>
<dbReference type="GO" id="GO:0022625">
    <property type="term" value="C:cytosolic large ribosomal subunit"/>
    <property type="evidence" value="ECO:0007669"/>
    <property type="project" value="TreeGrafter"/>
</dbReference>
<dbReference type="GO" id="GO:0003735">
    <property type="term" value="F:structural constituent of ribosome"/>
    <property type="evidence" value="ECO:0007669"/>
    <property type="project" value="InterPro"/>
</dbReference>
<dbReference type="GO" id="GO:0006412">
    <property type="term" value="P:translation"/>
    <property type="evidence" value="ECO:0007669"/>
    <property type="project" value="UniProtKB-UniRule"/>
</dbReference>
<dbReference type="FunFam" id="2.30.30.790:FF:000001">
    <property type="entry name" value="50S ribosomal protein L19"/>
    <property type="match status" value="1"/>
</dbReference>
<dbReference type="Gene3D" id="2.30.30.790">
    <property type="match status" value="1"/>
</dbReference>
<dbReference type="HAMAP" id="MF_00402">
    <property type="entry name" value="Ribosomal_bL19"/>
    <property type="match status" value="1"/>
</dbReference>
<dbReference type="InterPro" id="IPR001857">
    <property type="entry name" value="Ribosomal_bL19"/>
</dbReference>
<dbReference type="InterPro" id="IPR038657">
    <property type="entry name" value="Ribosomal_bL19_sf"/>
</dbReference>
<dbReference type="InterPro" id="IPR008991">
    <property type="entry name" value="Translation_prot_SH3-like_sf"/>
</dbReference>
<dbReference type="NCBIfam" id="TIGR01024">
    <property type="entry name" value="rplS_bact"/>
    <property type="match status" value="1"/>
</dbReference>
<dbReference type="PANTHER" id="PTHR15680:SF9">
    <property type="entry name" value="LARGE RIBOSOMAL SUBUNIT PROTEIN BL19M"/>
    <property type="match status" value="1"/>
</dbReference>
<dbReference type="PANTHER" id="PTHR15680">
    <property type="entry name" value="RIBOSOMAL PROTEIN L19"/>
    <property type="match status" value="1"/>
</dbReference>
<dbReference type="Pfam" id="PF01245">
    <property type="entry name" value="Ribosomal_L19"/>
    <property type="match status" value="1"/>
</dbReference>
<dbReference type="PIRSF" id="PIRSF002191">
    <property type="entry name" value="Ribosomal_L19"/>
    <property type="match status" value="1"/>
</dbReference>
<dbReference type="PRINTS" id="PR00061">
    <property type="entry name" value="RIBOSOMALL19"/>
</dbReference>
<dbReference type="SUPFAM" id="SSF50104">
    <property type="entry name" value="Translation proteins SH3-like domain"/>
    <property type="match status" value="1"/>
</dbReference>
<reference key="1">
    <citation type="journal article" date="2011" name="Stand. Genomic Sci.">
        <title>Complete genome sequence of the filamentous gliding predatory bacterium Herpetosiphon aurantiacus type strain (114-95(T)).</title>
        <authorList>
            <person name="Kiss H."/>
            <person name="Nett M."/>
            <person name="Domin N."/>
            <person name="Martin K."/>
            <person name="Maresca J.A."/>
            <person name="Copeland A."/>
            <person name="Lapidus A."/>
            <person name="Lucas S."/>
            <person name="Berry K.W."/>
            <person name="Glavina Del Rio T."/>
            <person name="Dalin E."/>
            <person name="Tice H."/>
            <person name="Pitluck S."/>
            <person name="Richardson P."/>
            <person name="Bruce D."/>
            <person name="Goodwin L."/>
            <person name="Han C."/>
            <person name="Detter J.C."/>
            <person name="Schmutz J."/>
            <person name="Brettin T."/>
            <person name="Land M."/>
            <person name="Hauser L."/>
            <person name="Kyrpides N.C."/>
            <person name="Ivanova N."/>
            <person name="Goeker M."/>
            <person name="Woyke T."/>
            <person name="Klenk H.P."/>
            <person name="Bryant D.A."/>
        </authorList>
    </citation>
    <scope>NUCLEOTIDE SEQUENCE [LARGE SCALE GENOMIC DNA]</scope>
    <source>
        <strain>ATCC 23779 / DSM 785 / 114-95</strain>
    </source>
</reference>
<proteinExistence type="inferred from homology"/>
<protein>
    <recommendedName>
        <fullName evidence="1">Large ribosomal subunit protein bL19</fullName>
    </recommendedName>
    <alternativeName>
        <fullName evidence="2">50S ribosomal protein L19</fullName>
    </alternativeName>
</protein>
<sequence>MQQAPVIHEIENEYLRKDVPEFRVGDTVRVSVKVVEGTRERIQDFEGVVIRRRRMGVNENFTVRRIASHGIGVERTFLLHSPRIDGVKLVRTGKVRQANLYYLRGRTGKAARIKERRG</sequence>
<comment type="function">
    <text evidence="1">This protein is located at the 30S-50S ribosomal subunit interface and may play a role in the structure and function of the aminoacyl-tRNA binding site.</text>
</comment>
<comment type="similarity">
    <text evidence="1">Belongs to the bacterial ribosomal protein bL19 family.</text>
</comment>
<accession>A9B6H5</accession>
<keyword id="KW-0687">Ribonucleoprotein</keyword>
<keyword id="KW-0689">Ribosomal protein</keyword>